<dbReference type="EC" id="2.7.4.25" evidence="1"/>
<dbReference type="EMBL" id="CP001184">
    <property type="protein sequence ID" value="ACI60131.1"/>
    <property type="molecule type" value="Genomic_DNA"/>
</dbReference>
<dbReference type="RefSeq" id="WP_012560294.1">
    <property type="nucleotide sequence ID" value="NC_011374.1"/>
</dbReference>
<dbReference type="SMR" id="B5ZBF2"/>
<dbReference type="STRING" id="565575.UUR10_0349"/>
<dbReference type="KEGG" id="uue:UUR10_0349"/>
<dbReference type="eggNOG" id="COG0283">
    <property type="taxonomic scope" value="Bacteria"/>
</dbReference>
<dbReference type="HOGENOM" id="CLU_079959_0_2_14"/>
<dbReference type="OrthoDB" id="9807434at2"/>
<dbReference type="Proteomes" id="UP000002018">
    <property type="component" value="Chromosome"/>
</dbReference>
<dbReference type="GO" id="GO:0005737">
    <property type="term" value="C:cytoplasm"/>
    <property type="evidence" value="ECO:0007669"/>
    <property type="project" value="UniProtKB-SubCell"/>
</dbReference>
<dbReference type="GO" id="GO:0005524">
    <property type="term" value="F:ATP binding"/>
    <property type="evidence" value="ECO:0007669"/>
    <property type="project" value="UniProtKB-UniRule"/>
</dbReference>
<dbReference type="GO" id="GO:0036430">
    <property type="term" value="F:CMP kinase activity"/>
    <property type="evidence" value="ECO:0007669"/>
    <property type="project" value="RHEA"/>
</dbReference>
<dbReference type="GO" id="GO:0036431">
    <property type="term" value="F:dCMP kinase activity"/>
    <property type="evidence" value="ECO:0007669"/>
    <property type="project" value="RHEA"/>
</dbReference>
<dbReference type="GO" id="GO:0006220">
    <property type="term" value="P:pyrimidine nucleotide metabolic process"/>
    <property type="evidence" value="ECO:0007669"/>
    <property type="project" value="UniProtKB-UniRule"/>
</dbReference>
<dbReference type="CDD" id="cd02020">
    <property type="entry name" value="CMPK"/>
    <property type="match status" value="1"/>
</dbReference>
<dbReference type="Gene3D" id="3.40.50.300">
    <property type="entry name" value="P-loop containing nucleotide triphosphate hydrolases"/>
    <property type="match status" value="1"/>
</dbReference>
<dbReference type="HAMAP" id="MF_00238">
    <property type="entry name" value="Cytidyl_kinase_type1"/>
    <property type="match status" value="1"/>
</dbReference>
<dbReference type="InterPro" id="IPR003136">
    <property type="entry name" value="Cytidylate_kin"/>
</dbReference>
<dbReference type="InterPro" id="IPR011994">
    <property type="entry name" value="Cytidylate_kinase_dom"/>
</dbReference>
<dbReference type="InterPro" id="IPR027417">
    <property type="entry name" value="P-loop_NTPase"/>
</dbReference>
<dbReference type="NCBIfam" id="TIGR00017">
    <property type="entry name" value="cmk"/>
    <property type="match status" value="1"/>
</dbReference>
<dbReference type="Pfam" id="PF02224">
    <property type="entry name" value="Cytidylate_kin"/>
    <property type="match status" value="1"/>
</dbReference>
<dbReference type="SUPFAM" id="SSF52540">
    <property type="entry name" value="P-loop containing nucleoside triphosphate hydrolases"/>
    <property type="match status" value="1"/>
</dbReference>
<sequence>MKKYINVAIDGPSGSGKSTAAKGLANKLGFLYINTGLMYRAYAYFLNENNLDINTNETACIEAIKNARFIFNGDDVKIDDQDVSDILRSNDVAMLASVVAANAKIRNLATNEQRKIASENNVVMDGRDIGSIVLVDADLKFYLNTSIQTRAKRRLAQNKDIEKLDYESIYNDIKERDYRDMTRDIAPLKKAIDAIEIFNDNMNLDQCVAHLYEIYLNKIKKS</sequence>
<evidence type="ECO:0000255" key="1">
    <source>
        <dbReference type="HAMAP-Rule" id="MF_00238"/>
    </source>
</evidence>
<name>KCY_UREU1</name>
<proteinExistence type="inferred from homology"/>
<gene>
    <name evidence="1" type="primary">cmk</name>
    <name type="ordered locus">UUR10_0349</name>
</gene>
<reference key="1">
    <citation type="submission" date="2008-10" db="EMBL/GenBank/DDBJ databases">
        <title>Genome sequence of Ureaplasma urealyticum serovar 10 ATCC-33699.</title>
        <authorList>
            <person name="Shrivastava S."/>
            <person name="Methe B.A."/>
            <person name="Glass J."/>
            <person name="White K."/>
            <person name="Duffy L.B."/>
        </authorList>
    </citation>
    <scope>NUCLEOTIDE SEQUENCE [LARGE SCALE GENOMIC DNA]</scope>
    <source>
        <strain>ATCC 33699 / Western</strain>
    </source>
</reference>
<comment type="catalytic activity">
    <reaction evidence="1">
        <text>CMP + ATP = CDP + ADP</text>
        <dbReference type="Rhea" id="RHEA:11600"/>
        <dbReference type="ChEBI" id="CHEBI:30616"/>
        <dbReference type="ChEBI" id="CHEBI:58069"/>
        <dbReference type="ChEBI" id="CHEBI:60377"/>
        <dbReference type="ChEBI" id="CHEBI:456216"/>
        <dbReference type="EC" id="2.7.4.25"/>
    </reaction>
</comment>
<comment type="catalytic activity">
    <reaction evidence="1">
        <text>dCMP + ATP = dCDP + ADP</text>
        <dbReference type="Rhea" id="RHEA:25094"/>
        <dbReference type="ChEBI" id="CHEBI:30616"/>
        <dbReference type="ChEBI" id="CHEBI:57566"/>
        <dbReference type="ChEBI" id="CHEBI:58593"/>
        <dbReference type="ChEBI" id="CHEBI:456216"/>
        <dbReference type="EC" id="2.7.4.25"/>
    </reaction>
</comment>
<comment type="subcellular location">
    <subcellularLocation>
        <location evidence="1">Cytoplasm</location>
    </subcellularLocation>
</comment>
<comment type="similarity">
    <text evidence="1">Belongs to the cytidylate kinase family. Type 1 subfamily.</text>
</comment>
<feature type="chain" id="PRO_1000100698" description="Cytidylate kinase">
    <location>
        <begin position="1"/>
        <end position="222"/>
    </location>
</feature>
<feature type="binding site" evidence="1">
    <location>
        <begin position="11"/>
        <end position="19"/>
    </location>
    <ligand>
        <name>ATP</name>
        <dbReference type="ChEBI" id="CHEBI:30616"/>
    </ligand>
</feature>
<keyword id="KW-0067">ATP-binding</keyword>
<keyword id="KW-0963">Cytoplasm</keyword>
<keyword id="KW-0418">Kinase</keyword>
<keyword id="KW-0547">Nucleotide-binding</keyword>
<keyword id="KW-0808">Transferase</keyword>
<accession>B5ZBF2</accession>
<organism>
    <name type="scientific">Ureaplasma urealyticum serovar 10 (strain ATCC 33699 / Western)</name>
    <dbReference type="NCBI Taxonomy" id="565575"/>
    <lineage>
        <taxon>Bacteria</taxon>
        <taxon>Bacillati</taxon>
        <taxon>Mycoplasmatota</taxon>
        <taxon>Mycoplasmoidales</taxon>
        <taxon>Mycoplasmoidaceae</taxon>
        <taxon>Ureaplasma</taxon>
    </lineage>
</organism>
<protein>
    <recommendedName>
        <fullName evidence="1">Cytidylate kinase</fullName>
        <shortName evidence="1">CK</shortName>
        <ecNumber evidence="1">2.7.4.25</ecNumber>
    </recommendedName>
    <alternativeName>
        <fullName evidence="1">Cytidine monophosphate kinase</fullName>
        <shortName evidence="1">CMP kinase</shortName>
    </alternativeName>
</protein>